<sequence length="187" mass="21672">MGNKQTIFTEEQLDNYQDCTFFNKKDILKLHARFYELAPNLVPMDYRKSPIVHVPMSLIIQMPELRENPFKERIVEAFSEDGEGNLTFNDFVDMFSVLCESAPRELKANYAFKIYDFNTDNFICKEDLELTLARLTKSELDEDEVVLVCDKVIEEADLDGDGKLGFADFEDMIAKAPDFLSTFHIRI</sequence>
<reference key="1">
    <citation type="journal article" date="2004" name="Genome Res.">
        <title>The status, quality, and expansion of the NIH full-length cDNA project: the Mammalian Gene Collection (MGC).</title>
        <authorList>
            <consortium name="The MGC Project Team"/>
        </authorList>
    </citation>
    <scope>NUCLEOTIDE SEQUENCE [LARGE SCALE MRNA]</scope>
    <source>
        <tissue>Brain</tissue>
    </source>
</reference>
<reference key="2">
    <citation type="journal article" date="2017" name="Nat. Commun.">
        <title>CIB2 interacts with TMC1 and TMC2 and is essential for mechanotransduction in auditory hair cells.</title>
        <authorList>
            <person name="Giese A.P.J."/>
            <person name="Tang Y.Q."/>
            <person name="Sinha G.P."/>
            <person name="Bowl M.R."/>
            <person name="Goldring A.C."/>
            <person name="Parker A."/>
            <person name="Freeman M.J."/>
            <person name="Brown S.D.M."/>
            <person name="Riazuddin S."/>
            <person name="Fettiplace R."/>
            <person name="Schafer W.R."/>
            <person name="Frolenkov G.I."/>
            <person name="Ahmed Z.M."/>
        </authorList>
    </citation>
    <scope>DEVELOPMENTAL STAGE</scope>
</reference>
<gene>
    <name type="primary">Cib2</name>
</gene>
<accession>Q568Z7</accession>
<name>CIB2_RAT</name>
<organism>
    <name type="scientific">Rattus norvegicus</name>
    <name type="common">Rat</name>
    <dbReference type="NCBI Taxonomy" id="10116"/>
    <lineage>
        <taxon>Eukaryota</taxon>
        <taxon>Metazoa</taxon>
        <taxon>Chordata</taxon>
        <taxon>Craniata</taxon>
        <taxon>Vertebrata</taxon>
        <taxon>Euteleostomi</taxon>
        <taxon>Mammalia</taxon>
        <taxon>Eutheria</taxon>
        <taxon>Euarchontoglires</taxon>
        <taxon>Glires</taxon>
        <taxon>Rodentia</taxon>
        <taxon>Myomorpha</taxon>
        <taxon>Muroidea</taxon>
        <taxon>Muridae</taxon>
        <taxon>Murinae</taxon>
        <taxon>Rattus</taxon>
    </lineage>
</organism>
<evidence type="ECO:0000250" key="1">
    <source>
        <dbReference type="UniProtKB" id="O75838"/>
    </source>
</evidence>
<evidence type="ECO:0000250" key="2">
    <source>
        <dbReference type="UniProtKB" id="Q9Z309"/>
    </source>
</evidence>
<evidence type="ECO:0000255" key="3">
    <source>
        <dbReference type="PROSITE-ProRule" id="PRU00448"/>
    </source>
</evidence>
<evidence type="ECO:0000269" key="4">
    <source>
    </source>
</evidence>
<keyword id="KW-0106">Calcium</keyword>
<keyword id="KW-1003">Cell membrane</keyword>
<keyword id="KW-0966">Cell projection</keyword>
<keyword id="KW-0963">Cytoplasm</keyword>
<keyword id="KW-0460">Magnesium</keyword>
<keyword id="KW-0472">Membrane</keyword>
<keyword id="KW-0479">Metal-binding</keyword>
<keyword id="KW-1185">Reference proteome</keyword>
<keyword id="KW-0677">Repeat</keyword>
<protein>
    <recommendedName>
        <fullName>Calcium and integrin-binding family member 2</fullName>
    </recommendedName>
</protein>
<dbReference type="EMBL" id="BC092630">
    <property type="protein sequence ID" value="AAH92630.1"/>
    <property type="molecule type" value="mRNA"/>
</dbReference>
<dbReference type="RefSeq" id="NP_001015010.1">
    <property type="nucleotide sequence ID" value="NM_001015010.1"/>
</dbReference>
<dbReference type="SMR" id="Q568Z7"/>
<dbReference type="FunCoup" id="Q568Z7">
    <property type="interactions" value="257"/>
</dbReference>
<dbReference type="STRING" id="10116.ENSRNOP00000071683"/>
<dbReference type="PhosphoSitePlus" id="Q568Z7"/>
<dbReference type="PaxDb" id="10116-ENSRNOP00000013623"/>
<dbReference type="GeneID" id="300719"/>
<dbReference type="KEGG" id="rno:300719"/>
<dbReference type="UCSC" id="RGD:1308718">
    <property type="organism name" value="rat"/>
</dbReference>
<dbReference type="AGR" id="RGD:1308718"/>
<dbReference type="CTD" id="10518"/>
<dbReference type="RGD" id="1308718">
    <property type="gene designation" value="Cib2"/>
</dbReference>
<dbReference type="eggNOG" id="KOG0038">
    <property type="taxonomic scope" value="Eukaryota"/>
</dbReference>
<dbReference type="HOGENOM" id="CLU_061288_6_0_1"/>
<dbReference type="InParanoid" id="Q568Z7"/>
<dbReference type="OrthoDB" id="114727at2759"/>
<dbReference type="PhylomeDB" id="Q568Z7"/>
<dbReference type="TreeFam" id="TF313865"/>
<dbReference type="PRO" id="PR:Q568Z7"/>
<dbReference type="Proteomes" id="UP000002494">
    <property type="component" value="Chromosome 8"/>
</dbReference>
<dbReference type="Bgee" id="ENSRNOG00000059834">
    <property type="expression patterns" value="Expressed in quadriceps femoris and 18 other cell types or tissues"/>
</dbReference>
<dbReference type="GO" id="GO:0071944">
    <property type="term" value="C:cell periphery"/>
    <property type="evidence" value="ECO:0000318"/>
    <property type="project" value="GO_Central"/>
</dbReference>
<dbReference type="GO" id="GO:0032437">
    <property type="term" value="C:cuticular plate"/>
    <property type="evidence" value="ECO:0000250"/>
    <property type="project" value="UniProtKB"/>
</dbReference>
<dbReference type="GO" id="GO:0005737">
    <property type="term" value="C:cytoplasm"/>
    <property type="evidence" value="ECO:0000250"/>
    <property type="project" value="UniProtKB"/>
</dbReference>
<dbReference type="GO" id="GO:0005829">
    <property type="term" value="C:cytosol"/>
    <property type="evidence" value="ECO:0000304"/>
    <property type="project" value="Reactome"/>
</dbReference>
<dbReference type="GO" id="GO:0005927">
    <property type="term" value="C:muscle tendon junction"/>
    <property type="evidence" value="ECO:0000266"/>
    <property type="project" value="RGD"/>
</dbReference>
<dbReference type="GO" id="GO:0031594">
    <property type="term" value="C:neuromuscular junction"/>
    <property type="evidence" value="ECO:0000266"/>
    <property type="project" value="RGD"/>
</dbReference>
<dbReference type="GO" id="GO:0001917">
    <property type="term" value="C:photoreceptor inner segment"/>
    <property type="evidence" value="ECO:0000250"/>
    <property type="project" value="UniProtKB"/>
</dbReference>
<dbReference type="GO" id="GO:0001750">
    <property type="term" value="C:photoreceptor outer segment"/>
    <property type="evidence" value="ECO:0000250"/>
    <property type="project" value="UniProtKB"/>
</dbReference>
<dbReference type="GO" id="GO:0042383">
    <property type="term" value="C:sarcolemma"/>
    <property type="evidence" value="ECO:0000266"/>
    <property type="project" value="RGD"/>
</dbReference>
<dbReference type="GO" id="GO:0032420">
    <property type="term" value="C:stereocilium"/>
    <property type="evidence" value="ECO:0000250"/>
    <property type="project" value="UniProtKB"/>
</dbReference>
<dbReference type="GO" id="GO:0005509">
    <property type="term" value="F:calcium ion binding"/>
    <property type="evidence" value="ECO:0000250"/>
    <property type="project" value="UniProtKB"/>
</dbReference>
<dbReference type="GO" id="GO:0005178">
    <property type="term" value="F:integrin binding"/>
    <property type="evidence" value="ECO:0000266"/>
    <property type="project" value="RGD"/>
</dbReference>
<dbReference type="GO" id="GO:0000287">
    <property type="term" value="F:magnesium ion binding"/>
    <property type="evidence" value="ECO:0000250"/>
    <property type="project" value="UniProtKB"/>
</dbReference>
<dbReference type="GO" id="GO:0042803">
    <property type="term" value="F:protein homodimerization activity"/>
    <property type="evidence" value="ECO:0000250"/>
    <property type="project" value="UniProtKB"/>
</dbReference>
<dbReference type="GO" id="GO:0044877">
    <property type="term" value="F:protein-containing complex binding"/>
    <property type="evidence" value="ECO:0000266"/>
    <property type="project" value="RGD"/>
</dbReference>
<dbReference type="GO" id="GO:0055074">
    <property type="term" value="P:calcium ion homeostasis"/>
    <property type="evidence" value="ECO:0000250"/>
    <property type="project" value="UniProtKB"/>
</dbReference>
<dbReference type="GO" id="GO:0071318">
    <property type="term" value="P:cellular response to ATP"/>
    <property type="evidence" value="ECO:0000250"/>
    <property type="project" value="UniProtKB"/>
</dbReference>
<dbReference type="GO" id="GO:0045494">
    <property type="term" value="P:photoreceptor cell maintenance"/>
    <property type="evidence" value="ECO:0000250"/>
    <property type="project" value="UniProtKB"/>
</dbReference>
<dbReference type="GO" id="GO:0007204">
    <property type="term" value="P:positive regulation of cytosolic calcium ion concentration"/>
    <property type="evidence" value="ECO:0000250"/>
    <property type="project" value="UniProtKB"/>
</dbReference>
<dbReference type="CDD" id="cd00051">
    <property type="entry name" value="EFh"/>
    <property type="match status" value="1"/>
</dbReference>
<dbReference type="FunFam" id="1.10.238.10:FF:000079">
    <property type="entry name" value="Calcium and integrin-binding family member 2"/>
    <property type="match status" value="1"/>
</dbReference>
<dbReference type="Gene3D" id="1.10.238.10">
    <property type="entry name" value="EF-hand"/>
    <property type="match status" value="2"/>
</dbReference>
<dbReference type="InterPro" id="IPR051433">
    <property type="entry name" value="CIBP"/>
</dbReference>
<dbReference type="InterPro" id="IPR011992">
    <property type="entry name" value="EF-hand-dom_pair"/>
</dbReference>
<dbReference type="InterPro" id="IPR018247">
    <property type="entry name" value="EF_Hand_1_Ca_BS"/>
</dbReference>
<dbReference type="InterPro" id="IPR002048">
    <property type="entry name" value="EF_hand_dom"/>
</dbReference>
<dbReference type="PANTHER" id="PTHR45791">
    <property type="entry name" value="CALCIUM AND INTEGRIN BINDING FAMILY MEMBER 2"/>
    <property type="match status" value="1"/>
</dbReference>
<dbReference type="PANTHER" id="PTHR45791:SF5">
    <property type="entry name" value="CALCIUM AND INTEGRIN-BINDING FAMILY MEMBER 2"/>
    <property type="match status" value="1"/>
</dbReference>
<dbReference type="Pfam" id="PF13499">
    <property type="entry name" value="EF-hand_7"/>
    <property type="match status" value="1"/>
</dbReference>
<dbReference type="SMART" id="SM00054">
    <property type="entry name" value="EFh"/>
    <property type="match status" value="3"/>
</dbReference>
<dbReference type="SUPFAM" id="SSF47473">
    <property type="entry name" value="EF-hand"/>
    <property type="match status" value="1"/>
</dbReference>
<dbReference type="PROSITE" id="PS00018">
    <property type="entry name" value="EF_HAND_1"/>
    <property type="match status" value="2"/>
</dbReference>
<dbReference type="PROSITE" id="PS50222">
    <property type="entry name" value="EF_HAND_2"/>
    <property type="match status" value="3"/>
</dbReference>
<proteinExistence type="evidence at protein level"/>
<feature type="chain" id="PRO_0000289289" description="Calcium and integrin-binding family member 2">
    <location>
        <begin position="1"/>
        <end position="187"/>
    </location>
</feature>
<feature type="domain" description="EF-hand 1" evidence="3">
    <location>
        <begin position="66"/>
        <end position="101"/>
    </location>
</feature>
<feature type="domain" description="EF-hand 2" evidence="3">
    <location>
        <begin position="103"/>
        <end position="138"/>
    </location>
</feature>
<feature type="domain" description="EF-hand 3" evidence="3">
    <location>
        <begin position="144"/>
        <end position="179"/>
    </location>
</feature>
<feature type="binding site" evidence="3">
    <location>
        <position position="116"/>
    </location>
    <ligand>
        <name>Ca(2+)</name>
        <dbReference type="ChEBI" id="CHEBI:29108"/>
        <label>1</label>
    </ligand>
</feature>
<feature type="binding site" evidence="3">
    <location>
        <position position="118"/>
    </location>
    <ligand>
        <name>Ca(2+)</name>
        <dbReference type="ChEBI" id="CHEBI:29108"/>
        <label>1</label>
    </ligand>
</feature>
<feature type="binding site" evidence="3">
    <location>
        <position position="120"/>
    </location>
    <ligand>
        <name>Ca(2+)</name>
        <dbReference type="ChEBI" id="CHEBI:29108"/>
        <label>1</label>
    </ligand>
</feature>
<feature type="binding site" evidence="3">
    <location>
        <position position="127"/>
    </location>
    <ligand>
        <name>Ca(2+)</name>
        <dbReference type="ChEBI" id="CHEBI:29108"/>
        <label>1</label>
    </ligand>
</feature>
<feature type="binding site" evidence="3">
    <location>
        <position position="157"/>
    </location>
    <ligand>
        <name>Ca(2+)</name>
        <dbReference type="ChEBI" id="CHEBI:29108"/>
        <label>2</label>
    </ligand>
</feature>
<feature type="binding site" evidence="3">
    <location>
        <position position="159"/>
    </location>
    <ligand>
        <name>Ca(2+)</name>
        <dbReference type="ChEBI" id="CHEBI:29108"/>
        <label>2</label>
    </ligand>
</feature>
<feature type="binding site" evidence="3">
    <location>
        <position position="161"/>
    </location>
    <ligand>
        <name>Ca(2+)</name>
        <dbReference type="ChEBI" id="CHEBI:29108"/>
        <label>2</label>
    </ligand>
</feature>
<feature type="binding site" evidence="3">
    <location>
        <position position="163"/>
    </location>
    <ligand>
        <name>Ca(2+)</name>
        <dbReference type="ChEBI" id="CHEBI:29108"/>
        <label>2</label>
    </ligand>
</feature>
<feature type="binding site" evidence="3">
    <location>
        <position position="168"/>
    </location>
    <ligand>
        <name>Ca(2+)</name>
        <dbReference type="ChEBI" id="CHEBI:29108"/>
        <label>2</label>
    </ligand>
</feature>
<comment type="function">
    <text evidence="1 2">Calcium- and integrin-binding protein that plays a role in intracellular calcium homeostasis (By similarity). Acts as an auxiliary subunit of the sensory mechanoelectrical transduction (MET) channel in hair cells (By similarity). Essential for mechanoelectrical transduction (MET) currents in auditory hair cells and thereby required for hearing (By similarity). Regulates the function of hair cell mechanotransduction by controlling the distribution of transmembrane channel-like proteins TMC1 and TMC2, and by regulating the function of the MET channels in hair cells (By similarity). Required for the maintenance of auditory hair cell stereocilia bundle morphology and function and for hair-cell survival in the cochlea (By similarity). Critical for proper photoreceptor cell maintenance and function (By similarity). Plays a role in intracellular calcium homeostasis by decreasing ATP-induced calcium release (By similarity).</text>
</comment>
<comment type="subunit">
    <text evidence="1 2">Monomer (By similarity). Homodimer (By similarity). Interacts with WHRN and MYO7A (By similarity). Interacts with ITGA2B (via C-terminus cytoplasmic tail region); the interactions are stabilized/increased in a calcium and magnesium-dependent manner (By similarity). Interacts with ITGA7 (via C-terminus cytoplasmic tail region); the interactions are stabilized/increased in a calcium and magnesium-dependent manner (By similarity). Interacts with TMC1 (By similarity). Interacts with TMC2 (By similarity).</text>
</comment>
<comment type="subcellular location">
    <subcellularLocation>
        <location evidence="2">Cytoplasm</location>
    </subcellularLocation>
    <subcellularLocation>
        <location evidence="1">Cell projection</location>
        <location evidence="1">Stereocilium</location>
    </subcellularLocation>
    <subcellularLocation>
        <location evidence="2">Photoreceptor inner segment</location>
    </subcellularLocation>
    <subcellularLocation>
        <location evidence="2">Cell projection</location>
        <location evidence="2">Cilium</location>
        <location evidence="2">Photoreceptor outer segment</location>
    </subcellularLocation>
    <subcellularLocation>
        <location evidence="2">Cell membrane</location>
        <location evidence="2">Sarcolemma</location>
    </subcellularLocation>
    <text evidence="1 2">Colocalizes with ITGA7 at the myotendinous junctions (MTJ) and at the neuromuscular junctions (NMJ) (By similarity). Located mainly in stereocilia and at the apical surface of hair cells of the cochlea (By similarity). Localizes in the cuticular plate along and at the tip of the stereocilia of vestibular sensory hair cells (By similarity).</text>
</comment>
<comment type="developmental stage">
    <text evidence="4">Expressed in auditory hair cells at P10 (at protein level).</text>
</comment>
<comment type="miscellaneous">
    <text evidence="1">The binding of either calcium or magnesium significantly increases the structural stability of the protein in comparison to apo-CIB (calcium- and magnesium-free form).</text>
</comment>